<protein>
    <recommendedName>
        <fullName>Calumenin</fullName>
    </recommendedName>
</protein>
<sequence length="315" mass="37156">MDTRRLLLCLCLWVACVVSKPTEKKDRVHHDPQLSEKVHDDAQNFDYDHDAFLGAEEAKTFDQLTPEESKERLGMIVSKIDLDNDGYVTEGELTAWIKKAQKKYVYDNVERQWQEFDLNQDGLVSWDEYRNVTYGTYLDDPDPDNSFNYKQMMVRDERRFKMADQDGDLIATKEEFTAFLHPEEFDYMKDIVVLETMEDIDKNGDGLIDLEEYIGDMYNHDGDANEPEWVKTEREQFVEFRDKNHDGKMDKEETKDWILPSDYDHAEAESRHLVYESDQNKDSKLTREEIVDKYDLFVGSQATDFGEALVRHDEF</sequence>
<reference key="1">
    <citation type="submission" date="2006-10" db="EMBL/GenBank/DDBJ databases">
        <authorList>
            <consortium name="Sanger Xenopus tropicalis EST/cDNA project"/>
        </authorList>
    </citation>
    <scope>NUCLEOTIDE SEQUENCE [LARGE SCALE MRNA]</scope>
    <source>
        <tissue>Neurula</tissue>
    </source>
</reference>
<comment type="function">
    <text evidence="1">Involved in regulation of vitamin K-dependent carboxylation of multiple N-terminal glutamate residues. Seems to inhibit gamma-carboxylase ggcx. Binds 7 calcium ions with a low affinity (By similarity).</text>
</comment>
<comment type="subunit">
    <text evidence="1">Interacts with ggcx.</text>
</comment>
<comment type="subcellular location">
    <subcellularLocation>
        <location evidence="2">Endoplasmic reticulum membrane</location>
    </subcellularLocation>
    <subcellularLocation>
        <location evidence="2">Golgi apparatus</location>
    </subcellularLocation>
    <subcellularLocation>
        <location evidence="2">Secreted</location>
    </subcellularLocation>
    <subcellularLocation>
        <location evidence="2">Melanosome</location>
    </subcellularLocation>
    <subcellularLocation>
        <location evidence="2">Sarcoplasmic reticulum lumen</location>
    </subcellularLocation>
</comment>
<comment type="similarity">
    <text evidence="5">Belongs to the CREC family.</text>
</comment>
<organism>
    <name type="scientific">Xenopus tropicalis</name>
    <name type="common">Western clawed frog</name>
    <name type="synonym">Silurana tropicalis</name>
    <dbReference type="NCBI Taxonomy" id="8364"/>
    <lineage>
        <taxon>Eukaryota</taxon>
        <taxon>Metazoa</taxon>
        <taxon>Chordata</taxon>
        <taxon>Craniata</taxon>
        <taxon>Vertebrata</taxon>
        <taxon>Euteleostomi</taxon>
        <taxon>Amphibia</taxon>
        <taxon>Batrachia</taxon>
        <taxon>Anura</taxon>
        <taxon>Pipoidea</taxon>
        <taxon>Pipidae</taxon>
        <taxon>Xenopodinae</taxon>
        <taxon>Xenopus</taxon>
        <taxon>Silurana</taxon>
    </lineage>
</organism>
<proteinExistence type="evidence at transcript level"/>
<keyword id="KW-0106">Calcium</keyword>
<keyword id="KW-0256">Endoplasmic reticulum</keyword>
<keyword id="KW-0325">Glycoprotein</keyword>
<keyword id="KW-0333">Golgi apparatus</keyword>
<keyword id="KW-0472">Membrane</keyword>
<keyword id="KW-0479">Metal-binding</keyword>
<keyword id="KW-1185">Reference proteome</keyword>
<keyword id="KW-0677">Repeat</keyword>
<keyword id="KW-0703">Sarcoplasmic reticulum</keyword>
<keyword id="KW-0964">Secreted</keyword>
<keyword id="KW-0732">Signal</keyword>
<feature type="signal peptide" evidence="1">
    <location>
        <begin position="1"/>
        <end position="19"/>
    </location>
</feature>
<feature type="chain" id="PRO_0000364198" description="Calumenin">
    <location>
        <begin position="20"/>
        <end position="315"/>
    </location>
</feature>
<feature type="domain" description="EF-hand 1" evidence="4">
    <location>
        <begin position="68"/>
        <end position="103"/>
    </location>
</feature>
<feature type="domain" description="EF-hand 2" evidence="4">
    <location>
        <begin position="104"/>
        <end position="139"/>
    </location>
</feature>
<feature type="domain" description="EF-hand 3" evidence="4">
    <location>
        <begin position="151"/>
        <end position="186"/>
    </location>
</feature>
<feature type="domain" description="EF-hand 4" evidence="4">
    <location>
        <begin position="188"/>
        <end position="223"/>
    </location>
</feature>
<feature type="domain" description="EF-hand 5" evidence="4">
    <location>
        <begin position="229"/>
        <end position="264"/>
    </location>
</feature>
<feature type="domain" description="EF-hand 6" evidence="4">
    <location>
        <begin position="265"/>
        <end position="300"/>
    </location>
</feature>
<feature type="short sequence motif" description="Prevents secretion from ER" evidence="1">
    <location>
        <begin position="312"/>
        <end position="315"/>
    </location>
</feature>
<feature type="binding site" evidence="4">
    <location>
        <position position="81"/>
    </location>
    <ligand>
        <name>Ca(2+)</name>
        <dbReference type="ChEBI" id="CHEBI:29108"/>
        <label>1</label>
    </ligand>
</feature>
<feature type="binding site" evidence="4">
    <location>
        <position position="83"/>
    </location>
    <ligand>
        <name>Ca(2+)</name>
        <dbReference type="ChEBI" id="CHEBI:29108"/>
        <label>1</label>
    </ligand>
</feature>
<feature type="binding site" evidence="4">
    <location>
        <position position="85"/>
    </location>
    <ligand>
        <name>Ca(2+)</name>
        <dbReference type="ChEBI" id="CHEBI:29108"/>
        <label>1</label>
    </ligand>
</feature>
<feature type="binding site" evidence="4">
    <location>
        <position position="87"/>
    </location>
    <ligand>
        <name>Ca(2+)</name>
        <dbReference type="ChEBI" id="CHEBI:29108"/>
        <label>1</label>
    </ligand>
</feature>
<feature type="binding site" evidence="4">
    <location>
        <position position="92"/>
    </location>
    <ligand>
        <name>Ca(2+)</name>
        <dbReference type="ChEBI" id="CHEBI:29108"/>
        <label>1</label>
    </ligand>
</feature>
<feature type="binding site" evidence="4">
    <location>
        <position position="117"/>
    </location>
    <ligand>
        <name>Ca(2+)</name>
        <dbReference type="ChEBI" id="CHEBI:29108"/>
        <label>2</label>
    </ligand>
</feature>
<feature type="binding site" evidence="4">
    <location>
        <position position="119"/>
    </location>
    <ligand>
        <name>Ca(2+)</name>
        <dbReference type="ChEBI" id="CHEBI:29108"/>
        <label>2</label>
    </ligand>
</feature>
<feature type="binding site" evidence="4">
    <location>
        <position position="121"/>
    </location>
    <ligand>
        <name>Ca(2+)</name>
        <dbReference type="ChEBI" id="CHEBI:29108"/>
        <label>2</label>
    </ligand>
</feature>
<feature type="binding site" evidence="4">
    <location>
        <position position="128"/>
    </location>
    <ligand>
        <name>Ca(2+)</name>
        <dbReference type="ChEBI" id="CHEBI:29108"/>
        <label>2</label>
    </ligand>
</feature>
<feature type="binding site" evidence="5">
    <location>
        <position position="164"/>
    </location>
    <ligand>
        <name>Ca(2+)</name>
        <dbReference type="ChEBI" id="CHEBI:29108"/>
        <label>3</label>
    </ligand>
</feature>
<feature type="binding site" evidence="5">
    <location>
        <position position="166"/>
    </location>
    <ligand>
        <name>Ca(2+)</name>
        <dbReference type="ChEBI" id="CHEBI:29108"/>
        <label>3</label>
    </ligand>
</feature>
<feature type="binding site" evidence="5">
    <location>
        <position position="168"/>
    </location>
    <ligand>
        <name>Ca(2+)</name>
        <dbReference type="ChEBI" id="CHEBI:29108"/>
        <label>3</label>
    </ligand>
</feature>
<feature type="binding site" evidence="5">
    <location>
        <position position="175"/>
    </location>
    <ligand>
        <name>Ca(2+)</name>
        <dbReference type="ChEBI" id="CHEBI:29108"/>
        <label>3</label>
    </ligand>
</feature>
<feature type="binding site" evidence="4">
    <location>
        <position position="201"/>
    </location>
    <ligand>
        <name>Ca(2+)</name>
        <dbReference type="ChEBI" id="CHEBI:29108"/>
        <label>4</label>
    </ligand>
</feature>
<feature type="binding site" evidence="4">
    <location>
        <position position="203"/>
    </location>
    <ligand>
        <name>Ca(2+)</name>
        <dbReference type="ChEBI" id="CHEBI:29108"/>
        <label>4</label>
    </ligand>
</feature>
<feature type="binding site" evidence="4">
    <location>
        <position position="205"/>
    </location>
    <ligand>
        <name>Ca(2+)</name>
        <dbReference type="ChEBI" id="CHEBI:29108"/>
        <label>4</label>
    </ligand>
</feature>
<feature type="binding site" evidence="4">
    <location>
        <position position="212"/>
    </location>
    <ligand>
        <name>Ca(2+)</name>
        <dbReference type="ChEBI" id="CHEBI:29108"/>
        <label>4</label>
    </ligand>
</feature>
<feature type="binding site" evidence="5">
    <location>
        <position position="242"/>
    </location>
    <ligand>
        <name>Ca(2+)</name>
        <dbReference type="ChEBI" id="CHEBI:29108"/>
        <label>5</label>
    </ligand>
</feature>
<feature type="binding site" evidence="5">
    <location>
        <position position="244"/>
    </location>
    <ligand>
        <name>Ca(2+)</name>
        <dbReference type="ChEBI" id="CHEBI:29108"/>
        <label>5</label>
    </ligand>
</feature>
<feature type="binding site" evidence="5">
    <location>
        <position position="246"/>
    </location>
    <ligand>
        <name>Ca(2+)</name>
        <dbReference type="ChEBI" id="CHEBI:29108"/>
        <label>5</label>
    </ligand>
</feature>
<feature type="binding site" evidence="5">
    <location>
        <position position="248"/>
    </location>
    <ligand>
        <name>Ca(2+)</name>
        <dbReference type="ChEBI" id="CHEBI:29108"/>
        <label>5</label>
    </ligand>
</feature>
<feature type="binding site" evidence="5">
    <location>
        <position position="253"/>
    </location>
    <ligand>
        <name>Ca(2+)</name>
        <dbReference type="ChEBI" id="CHEBI:29108"/>
        <label>5</label>
    </ligand>
</feature>
<feature type="binding site" evidence="5">
    <location>
        <position position="278"/>
    </location>
    <ligand>
        <name>Ca(2+)</name>
        <dbReference type="ChEBI" id="CHEBI:29108"/>
        <label>6</label>
    </ligand>
</feature>
<feature type="binding site" evidence="5">
    <location>
        <position position="280"/>
    </location>
    <ligand>
        <name>Ca(2+)</name>
        <dbReference type="ChEBI" id="CHEBI:29108"/>
        <label>6</label>
    </ligand>
</feature>
<feature type="binding site" evidence="5">
    <location>
        <position position="282"/>
    </location>
    <ligand>
        <name>Ca(2+)</name>
        <dbReference type="ChEBI" id="CHEBI:29108"/>
        <label>6</label>
    </ligand>
</feature>
<feature type="binding site" evidence="5">
    <location>
        <position position="284"/>
    </location>
    <ligand>
        <name>Ca(2+)</name>
        <dbReference type="ChEBI" id="CHEBI:29108"/>
        <label>6</label>
    </ligand>
</feature>
<feature type="binding site" evidence="5">
    <location>
        <position position="289"/>
    </location>
    <ligand>
        <name>Ca(2+)</name>
        <dbReference type="ChEBI" id="CHEBI:29108"/>
        <label>6</label>
    </ligand>
</feature>
<feature type="glycosylation site" description="N-linked (GlcNAc...) asparagine" evidence="3">
    <location>
        <position position="131"/>
    </location>
</feature>
<accession>Q28BT4</accession>
<gene>
    <name type="primary">calu</name>
    <name type="ORF">TNeu055n17.1</name>
</gene>
<name>CALU_XENTR</name>
<dbReference type="EMBL" id="CR942649">
    <property type="protein sequence ID" value="CAJ82342.1"/>
    <property type="molecule type" value="mRNA"/>
</dbReference>
<dbReference type="RefSeq" id="XP_012814244.1">
    <property type="nucleotide sequence ID" value="XM_012958790.3"/>
</dbReference>
<dbReference type="SMR" id="Q28BT4"/>
<dbReference type="FunCoup" id="Q28BT4">
    <property type="interactions" value="2615"/>
</dbReference>
<dbReference type="STRING" id="8364.ENSXETP00000031877"/>
<dbReference type="GlyCosmos" id="Q28BT4">
    <property type="glycosylation" value="1 site, No reported glycans"/>
</dbReference>
<dbReference type="PaxDb" id="8364-ENSXETP00000049856"/>
<dbReference type="GeneID" id="407965"/>
<dbReference type="AGR" id="Xenbase:XB-GENE-1007422"/>
<dbReference type="CTD" id="813"/>
<dbReference type="Xenbase" id="XB-GENE-1007422">
    <property type="gene designation" value="calu"/>
</dbReference>
<dbReference type="eggNOG" id="KOG4223">
    <property type="taxonomic scope" value="Eukaryota"/>
</dbReference>
<dbReference type="InParanoid" id="Q28BT4"/>
<dbReference type="OMA" id="FEADVDH"/>
<dbReference type="OrthoDB" id="293868at2759"/>
<dbReference type="Reactome" id="R-XTR-381426">
    <property type="pathway name" value="Regulation of Insulin-like Growth Factor (IGF) transport and uptake by Insulin-like Growth Factor Binding Proteins (IGFBPs)"/>
</dbReference>
<dbReference type="Reactome" id="R-XTR-8957275">
    <property type="pathway name" value="Post-translational protein phosphorylation"/>
</dbReference>
<dbReference type="Proteomes" id="UP000008143">
    <property type="component" value="Chromosome 3"/>
</dbReference>
<dbReference type="Bgee" id="ENSXETG00000023059">
    <property type="expression patterns" value="Expressed in embryo and 23 other cell types or tissues"/>
</dbReference>
<dbReference type="GO" id="GO:0005789">
    <property type="term" value="C:endoplasmic reticulum membrane"/>
    <property type="evidence" value="ECO:0007669"/>
    <property type="project" value="UniProtKB-SubCell"/>
</dbReference>
<dbReference type="GO" id="GO:0005576">
    <property type="term" value="C:extracellular region"/>
    <property type="evidence" value="ECO:0007669"/>
    <property type="project" value="UniProtKB-SubCell"/>
</dbReference>
<dbReference type="GO" id="GO:0005794">
    <property type="term" value="C:Golgi apparatus"/>
    <property type="evidence" value="ECO:0007669"/>
    <property type="project" value="UniProtKB-SubCell"/>
</dbReference>
<dbReference type="GO" id="GO:0042470">
    <property type="term" value="C:melanosome"/>
    <property type="evidence" value="ECO:0007669"/>
    <property type="project" value="UniProtKB-SubCell"/>
</dbReference>
<dbReference type="GO" id="GO:0033018">
    <property type="term" value="C:sarcoplasmic reticulum lumen"/>
    <property type="evidence" value="ECO:0007669"/>
    <property type="project" value="UniProtKB-SubCell"/>
</dbReference>
<dbReference type="GO" id="GO:0005509">
    <property type="term" value="F:calcium ion binding"/>
    <property type="evidence" value="ECO:0007669"/>
    <property type="project" value="InterPro"/>
</dbReference>
<dbReference type="CDD" id="cd16228">
    <property type="entry name" value="EFh_CREC_Calumenin"/>
    <property type="match status" value="1"/>
</dbReference>
<dbReference type="FunFam" id="1.10.238.10:FF:000090">
    <property type="entry name" value="calumenin isoform X2"/>
    <property type="match status" value="1"/>
</dbReference>
<dbReference type="FunFam" id="1.10.238.10:FF:000109">
    <property type="entry name" value="calumenin isoform X2"/>
    <property type="match status" value="1"/>
</dbReference>
<dbReference type="FunFam" id="1.10.238.10:FF:000110">
    <property type="entry name" value="calumenin isoform X2"/>
    <property type="match status" value="1"/>
</dbReference>
<dbReference type="Gene3D" id="1.10.238.10">
    <property type="entry name" value="EF-hand"/>
    <property type="match status" value="2"/>
</dbReference>
<dbReference type="InterPro" id="IPR011992">
    <property type="entry name" value="EF-hand-dom_pair"/>
</dbReference>
<dbReference type="InterPro" id="IPR018247">
    <property type="entry name" value="EF_Hand_1_Ca_BS"/>
</dbReference>
<dbReference type="InterPro" id="IPR002048">
    <property type="entry name" value="EF_hand_dom"/>
</dbReference>
<dbReference type="PANTHER" id="PTHR10827:SF76">
    <property type="entry name" value="CALUMENIN"/>
    <property type="match status" value="1"/>
</dbReference>
<dbReference type="PANTHER" id="PTHR10827">
    <property type="entry name" value="RETICULOCALBIN"/>
    <property type="match status" value="1"/>
</dbReference>
<dbReference type="Pfam" id="PF13202">
    <property type="entry name" value="EF-hand_5"/>
    <property type="match status" value="1"/>
</dbReference>
<dbReference type="Pfam" id="PF13499">
    <property type="entry name" value="EF-hand_7"/>
    <property type="match status" value="1"/>
</dbReference>
<dbReference type="SMART" id="SM00054">
    <property type="entry name" value="EFh"/>
    <property type="match status" value="3"/>
</dbReference>
<dbReference type="SUPFAM" id="SSF47473">
    <property type="entry name" value="EF-hand"/>
    <property type="match status" value="2"/>
</dbReference>
<dbReference type="PROSITE" id="PS00018">
    <property type="entry name" value="EF_HAND_1"/>
    <property type="match status" value="3"/>
</dbReference>
<dbReference type="PROSITE" id="PS50222">
    <property type="entry name" value="EF_HAND_2"/>
    <property type="match status" value="6"/>
</dbReference>
<evidence type="ECO:0000250" key="1"/>
<evidence type="ECO:0000250" key="2">
    <source>
        <dbReference type="UniProtKB" id="O43852"/>
    </source>
</evidence>
<evidence type="ECO:0000255" key="3"/>
<evidence type="ECO:0000255" key="4">
    <source>
        <dbReference type="PROSITE-ProRule" id="PRU00448"/>
    </source>
</evidence>
<evidence type="ECO:0000305" key="5"/>